<proteinExistence type="inferred from homology"/>
<comment type="function">
    <text>Cytochrome c oxidase is the component of the respiratory chain that catalyzes the reduction of oxygen to water. Subunits 1-3 form the functional core of the enzyme complex. Co I is the catalytic subunit of the enzyme. Electrons originating in cytochrome c or a quinol are transferred to the bimetallic center formed by a high-spin heme and copper B.</text>
</comment>
<comment type="catalytic activity">
    <reaction>
        <text>4 Fe(II)-[cytochrome c] + O2 + 8 H(+)(in) = 4 Fe(III)-[cytochrome c] + 2 H2O + 4 H(+)(out)</text>
        <dbReference type="Rhea" id="RHEA:11436"/>
        <dbReference type="Rhea" id="RHEA-COMP:10350"/>
        <dbReference type="Rhea" id="RHEA-COMP:14399"/>
        <dbReference type="ChEBI" id="CHEBI:15377"/>
        <dbReference type="ChEBI" id="CHEBI:15378"/>
        <dbReference type="ChEBI" id="CHEBI:15379"/>
        <dbReference type="ChEBI" id="CHEBI:29033"/>
        <dbReference type="ChEBI" id="CHEBI:29034"/>
        <dbReference type="EC" id="7.1.1.9"/>
    </reaction>
</comment>
<comment type="cofactor">
    <cofactor evidence="1">
        <name>Cu(2+)</name>
        <dbReference type="ChEBI" id="CHEBI:29036"/>
    </cofactor>
    <text evidence="1">Binds 1 copper ion per subunit, denoted as copper B.</text>
</comment>
<comment type="cofactor">
    <cofactor evidence="1">
        <name>heme b</name>
        <dbReference type="ChEBI" id="CHEBI:60344"/>
    </cofactor>
    <text evidence="1">Binds 2 heme b groups per subunit, denoted as high- and low-spin.</text>
</comment>
<comment type="pathway">
    <text>Energy metabolism; oxidative phosphorylation.</text>
</comment>
<comment type="subcellular location">
    <subcellularLocation>
        <location>Cell membrane</location>
        <topology>Multi-pass membrane protein</topology>
    </subcellularLocation>
</comment>
<comment type="similarity">
    <text evidence="3">Belongs to the heme-copper respiratory oxidase family.</text>
</comment>
<accession>P98056</accession>
<accession>A8HZ09</accession>
<sequence>MSIVQTPAKRMTGGELGLILVFAALGFFSIVVAAKAYTPEYAFHAYLFAAASIATVFVIGNRYMDRPAELPPQTIDGKPNYNMAPVKVGTLLAVFWGIAGFLIGVIIALQMAYPLFNFDLPWISFGRLRPLHTSAVIFAFGGNVLIATSFYVVQRTSHARLAGYLAPWFVVLGYNFFIVIAGTGYLLGITQGKEYAEPEWYADLWLTIVWVTYFLVFLGTVLKRKEPHIYVANWFYLAFILTIAVLHLGNNAAIPVSVFSPKSYIVWSGVQDAMVQWWYGHNAVGFFLTAGFLALMYYFIPKRADKPVYSYRLSIVHFWALIFLYIWAGPHHLHYTALPDWAQTLGMTFSIMLWMPSWGGMINGLMTLSGAWDKLRTDPIIRMMVVAVAFYGMATFEGPMMSVKSVNSLSHYTEWGIGHVHSGALGWVAYISFGAIYCLIPWLWNKREMYSMKAIEWHFWVSTLGIVLYICAMWVAGILQGLMWRAYTALGFLEYSFIETVEAMHPLYVIRAIGGILFLAGSLIMAWNVFMTITRAETVSQPSGAALAPAE</sequence>
<name>FIXN_AZOC5</name>
<keyword id="KW-1003">Cell membrane</keyword>
<keyword id="KW-0186">Copper</keyword>
<keyword id="KW-0249">Electron transport</keyword>
<keyword id="KW-0349">Heme</keyword>
<keyword id="KW-0408">Iron</keyword>
<keyword id="KW-0472">Membrane</keyword>
<keyword id="KW-0479">Metal-binding</keyword>
<keyword id="KW-1185">Reference proteome</keyword>
<keyword id="KW-0679">Respiratory chain</keyword>
<keyword id="KW-1278">Translocase</keyword>
<keyword id="KW-0812">Transmembrane</keyword>
<keyword id="KW-1133">Transmembrane helix</keyword>
<keyword id="KW-0813">Transport</keyword>
<gene>
    <name type="primary">fixN</name>
    <name type="ordered locus">AZC_4523</name>
</gene>
<dbReference type="EC" id="7.1.1.9"/>
<dbReference type="EMBL" id="X74410">
    <property type="protein sequence ID" value="CAA52429.1"/>
    <property type="molecule type" value="Genomic_DNA"/>
</dbReference>
<dbReference type="EMBL" id="AP009384">
    <property type="protein sequence ID" value="BAF90521.1"/>
    <property type="molecule type" value="Genomic_DNA"/>
</dbReference>
<dbReference type="PIR" id="A55582">
    <property type="entry name" value="A55582"/>
</dbReference>
<dbReference type="SMR" id="P98056"/>
<dbReference type="STRING" id="438753.AZC_4523"/>
<dbReference type="KEGG" id="azc:AZC_4523"/>
<dbReference type="eggNOG" id="COG3278">
    <property type="taxonomic scope" value="Bacteria"/>
</dbReference>
<dbReference type="HOGENOM" id="CLU_017702_3_4_5"/>
<dbReference type="UniPathway" id="UPA00705"/>
<dbReference type="Proteomes" id="UP000000270">
    <property type="component" value="Chromosome"/>
</dbReference>
<dbReference type="GO" id="GO:0005886">
    <property type="term" value="C:plasma membrane"/>
    <property type="evidence" value="ECO:0007669"/>
    <property type="project" value="UniProtKB-SubCell"/>
</dbReference>
<dbReference type="GO" id="GO:0004129">
    <property type="term" value="F:cytochrome-c oxidase activity"/>
    <property type="evidence" value="ECO:0007669"/>
    <property type="project" value="UniProtKB-EC"/>
</dbReference>
<dbReference type="GO" id="GO:0020037">
    <property type="term" value="F:heme binding"/>
    <property type="evidence" value="ECO:0007669"/>
    <property type="project" value="InterPro"/>
</dbReference>
<dbReference type="GO" id="GO:0046872">
    <property type="term" value="F:metal ion binding"/>
    <property type="evidence" value="ECO:0007669"/>
    <property type="project" value="UniProtKB-KW"/>
</dbReference>
<dbReference type="GO" id="GO:0015990">
    <property type="term" value="P:electron transport coupled proton transport"/>
    <property type="evidence" value="ECO:0007669"/>
    <property type="project" value="TreeGrafter"/>
</dbReference>
<dbReference type="GO" id="GO:0006119">
    <property type="term" value="P:oxidative phosphorylation"/>
    <property type="evidence" value="ECO:0007669"/>
    <property type="project" value="UniProtKB-UniPathway"/>
</dbReference>
<dbReference type="GO" id="GO:0022904">
    <property type="term" value="P:respiratory electron transport chain"/>
    <property type="evidence" value="ECO:0007669"/>
    <property type="project" value="TreeGrafter"/>
</dbReference>
<dbReference type="CDD" id="cd01661">
    <property type="entry name" value="cbb3_Oxidase_I"/>
    <property type="match status" value="1"/>
</dbReference>
<dbReference type="FunFam" id="1.20.210.10:FF:000005">
    <property type="entry name" value="Cytochrome c oxidase, cbb3-type, subunit I"/>
    <property type="match status" value="1"/>
</dbReference>
<dbReference type="Gene3D" id="1.20.210.10">
    <property type="entry name" value="Cytochrome c oxidase-like, subunit I domain"/>
    <property type="match status" value="1"/>
</dbReference>
<dbReference type="InterPro" id="IPR023616">
    <property type="entry name" value="Cyt_c_oxase-like_su1_dom"/>
</dbReference>
<dbReference type="InterPro" id="IPR036927">
    <property type="entry name" value="Cyt_c_oxase-like_su1_sf"/>
</dbReference>
<dbReference type="InterPro" id="IPR000883">
    <property type="entry name" value="Cyt_C_Oxase_1"/>
</dbReference>
<dbReference type="InterPro" id="IPR023615">
    <property type="entry name" value="Cyt_c_Oxase_su1_BS"/>
</dbReference>
<dbReference type="InterPro" id="IPR004677">
    <property type="entry name" value="Cyt_c_oxidase_cbb3_su1"/>
</dbReference>
<dbReference type="NCBIfam" id="TIGR00780">
    <property type="entry name" value="ccoN"/>
    <property type="match status" value="1"/>
</dbReference>
<dbReference type="PANTHER" id="PTHR10422">
    <property type="entry name" value="CYTOCHROME C OXIDASE SUBUNIT 1"/>
    <property type="match status" value="1"/>
</dbReference>
<dbReference type="PANTHER" id="PTHR10422:SF29">
    <property type="entry name" value="CYTOCHROME C OXIDASE SUBUNIT 1 HOMOLOG, BACTEROID"/>
    <property type="match status" value="1"/>
</dbReference>
<dbReference type="Pfam" id="PF00115">
    <property type="entry name" value="COX1"/>
    <property type="match status" value="1"/>
</dbReference>
<dbReference type="SUPFAM" id="SSF81442">
    <property type="entry name" value="Cytochrome c oxidase subunit I-like"/>
    <property type="match status" value="1"/>
</dbReference>
<dbReference type="PROSITE" id="PS50855">
    <property type="entry name" value="COX1"/>
    <property type="match status" value="1"/>
</dbReference>
<dbReference type="PROSITE" id="PS00077">
    <property type="entry name" value="COX1_CUB"/>
    <property type="match status" value="1"/>
</dbReference>
<protein>
    <recommendedName>
        <fullName>Cytochrome c oxidase subunit 1 homolog</fullName>
        <ecNumber>7.1.1.9</ecNumber>
    </recommendedName>
    <alternativeName>
        <fullName>Cytochrome c oxidase polypeptide I homolog</fullName>
    </alternativeName>
</protein>
<feature type="chain" id="PRO_0000183468" description="Cytochrome c oxidase subunit 1 homolog">
    <location>
        <begin position="1"/>
        <end position="551"/>
    </location>
</feature>
<feature type="transmembrane region" description="Helical" evidence="2">
    <location>
        <begin position="14"/>
        <end position="34"/>
    </location>
</feature>
<feature type="transmembrane region" description="Helical" evidence="2">
    <location>
        <begin position="40"/>
        <end position="60"/>
    </location>
</feature>
<feature type="transmembrane region" description="Helical" evidence="2">
    <location>
        <begin position="88"/>
        <end position="108"/>
    </location>
</feature>
<feature type="transmembrane region" description="Helical" evidence="2">
    <location>
        <begin position="133"/>
        <end position="153"/>
    </location>
</feature>
<feature type="transmembrane region" description="Helical" evidence="2">
    <location>
        <begin position="169"/>
        <end position="189"/>
    </location>
</feature>
<feature type="transmembrane region" description="Helical" evidence="2">
    <location>
        <begin position="202"/>
        <end position="222"/>
    </location>
</feature>
<feature type="transmembrane region" description="Helical" evidence="2">
    <location>
        <begin position="229"/>
        <end position="249"/>
    </location>
</feature>
<feature type="transmembrane region" description="Helical" evidence="2">
    <location>
        <begin position="280"/>
        <end position="300"/>
    </location>
</feature>
<feature type="transmembrane region" description="Helical" evidence="2">
    <location>
        <begin position="313"/>
        <end position="333"/>
    </location>
</feature>
<feature type="transmembrane region" description="Helical" evidence="2">
    <location>
        <begin position="345"/>
        <end position="365"/>
    </location>
</feature>
<feature type="transmembrane region" description="Helical" evidence="2">
    <location>
        <begin position="383"/>
        <end position="403"/>
    </location>
</feature>
<feature type="transmembrane region" description="Helical" evidence="2">
    <location>
        <begin position="424"/>
        <end position="444"/>
    </location>
</feature>
<feature type="transmembrane region" description="Helical" evidence="2">
    <location>
        <begin position="459"/>
        <end position="479"/>
    </location>
</feature>
<feature type="transmembrane region" description="Helical" evidence="2">
    <location>
        <begin position="513"/>
        <end position="533"/>
    </location>
</feature>
<feature type="binding site" description="axial binding residue" evidence="1">
    <location>
        <position position="132"/>
    </location>
    <ligand>
        <name>heme b</name>
        <dbReference type="ChEBI" id="CHEBI:60344"/>
        <label>1; low-spin</label>
    </ligand>
    <ligandPart>
        <name>Fe</name>
        <dbReference type="ChEBI" id="CHEBI:18248"/>
    </ligandPart>
</feature>
<feature type="binding site" evidence="1">
    <location>
        <position position="281"/>
    </location>
    <ligand>
        <name>Cu cation</name>
        <dbReference type="ChEBI" id="CHEBI:23378"/>
        <label>B</label>
    </ligand>
</feature>
<feature type="binding site" evidence="1">
    <location>
        <position position="331"/>
    </location>
    <ligand>
        <name>Cu cation</name>
        <dbReference type="ChEBI" id="CHEBI:23378"/>
        <label>B</label>
    </ligand>
</feature>
<feature type="binding site" evidence="1">
    <location>
        <position position="332"/>
    </location>
    <ligand>
        <name>Cu cation</name>
        <dbReference type="ChEBI" id="CHEBI:23378"/>
        <label>B</label>
    </ligand>
</feature>
<feature type="binding site" description="axial binding residue" evidence="1">
    <location>
        <position position="419"/>
    </location>
    <ligand>
        <name>heme b</name>
        <dbReference type="ChEBI" id="CHEBI:60344"/>
        <label>2; high-spin</label>
    </ligand>
    <ligandPart>
        <name>Fe</name>
        <dbReference type="ChEBI" id="CHEBI:18248"/>
    </ligandPart>
</feature>
<feature type="binding site" description="axial binding residue" evidence="1">
    <location>
        <position position="421"/>
    </location>
    <ligand>
        <name>heme b</name>
        <dbReference type="ChEBI" id="CHEBI:60344"/>
        <label>1; low-spin</label>
    </ligand>
    <ligandPart>
        <name>Fe</name>
        <dbReference type="ChEBI" id="CHEBI:18248"/>
    </ligandPart>
</feature>
<organism>
    <name type="scientific">Azorhizobium caulinodans (strain ATCC 43989 / DSM 5975 / JCM 20966 / LMG 6465 / NBRC 14845 / NCIMB 13405 / ORS 571)</name>
    <dbReference type="NCBI Taxonomy" id="438753"/>
    <lineage>
        <taxon>Bacteria</taxon>
        <taxon>Pseudomonadati</taxon>
        <taxon>Pseudomonadota</taxon>
        <taxon>Alphaproteobacteria</taxon>
        <taxon>Hyphomicrobiales</taxon>
        <taxon>Xanthobacteraceae</taxon>
        <taxon>Azorhizobium</taxon>
    </lineage>
</organism>
<reference key="1">
    <citation type="journal article" date="1993" name="FEMS Microbiol. Lett.">
        <title>Role of the fixGHI region of Azorhizobium caulinodans in free-living and symbiotic nitrogen fixation.</title>
        <authorList>
            <person name="Mandon K."/>
            <person name="Kaminski P.A."/>
            <person name="Mougel C."/>
            <person name="Desnoues N."/>
            <person name="Elmerich C."/>
        </authorList>
    </citation>
    <scope>NUCLEOTIDE SEQUENCE [GENOMIC DNA]</scope>
</reference>
<reference key="2">
    <citation type="journal article" date="1994" name="J. Bacteriol.">
        <title>Functional analysis of the fixNOQP region of Azorhizobium caulinodans.</title>
        <authorList>
            <person name="Mandon K."/>
            <person name="Kaminski P.A."/>
            <person name="Elmerich C."/>
        </authorList>
    </citation>
    <scope>NUCLEOTIDE SEQUENCE [GENOMIC DNA]</scope>
</reference>
<reference key="3">
    <citation type="submission" date="2007-04" db="EMBL/GenBank/DDBJ databases">
        <title>Complete genome sequence of the nitrogen-fixing bacterium Azorhizobium caulinodans ORS571.</title>
        <authorList>
            <person name="Lee K.B."/>
            <person name="Backer P.D."/>
            <person name="Aono T."/>
            <person name="Liu C.T."/>
            <person name="Suzuki S."/>
            <person name="Suzuki T."/>
            <person name="Kaneko T."/>
            <person name="Yamada M."/>
            <person name="Tabata S."/>
            <person name="Kupfer D.M."/>
            <person name="Najar F.Z."/>
            <person name="Wiley G.B."/>
            <person name="Roe B."/>
            <person name="Binnewies T."/>
            <person name="Ussery D."/>
            <person name="Vereecke D."/>
            <person name="Gevers D."/>
            <person name="Holsters M."/>
            <person name="Oyaizu H."/>
        </authorList>
    </citation>
    <scope>NUCLEOTIDE SEQUENCE [LARGE SCALE GENOMIC DNA]</scope>
    <source>
        <strain>ATCC 43989 / DSM 5975 / JCM 20966 / LMG 6465 / NBRC 14845 / NCIMB 13405 / ORS 571</strain>
    </source>
</reference>
<evidence type="ECO:0000250" key="1">
    <source>
        <dbReference type="UniProtKB" id="D9IA43"/>
    </source>
</evidence>
<evidence type="ECO:0000255" key="2"/>
<evidence type="ECO:0000305" key="3"/>